<dbReference type="EC" id="3.1.-.-"/>
<dbReference type="EMBL" id="AK083017">
    <property type="protein sequence ID" value="BAC38733.1"/>
    <property type="molecule type" value="mRNA"/>
</dbReference>
<dbReference type="EMBL" id="AK144107">
    <property type="protein sequence ID" value="BAE25703.1"/>
    <property type="molecule type" value="mRNA"/>
</dbReference>
<dbReference type="EMBL" id="AL645740">
    <property type="status" value="NOT_ANNOTATED_CDS"/>
    <property type="molecule type" value="Genomic_DNA"/>
</dbReference>
<dbReference type="EMBL" id="AL671520">
    <property type="status" value="NOT_ANNOTATED_CDS"/>
    <property type="molecule type" value="Genomic_DNA"/>
</dbReference>
<dbReference type="EMBL" id="BC079640">
    <property type="protein sequence ID" value="AAH79640.1"/>
    <property type="molecule type" value="mRNA"/>
</dbReference>
<dbReference type="EMBL" id="BC116685">
    <property type="protein sequence ID" value="AAI16686.1"/>
    <property type="molecule type" value="mRNA"/>
</dbReference>
<dbReference type="EMBL" id="BC117540">
    <property type="protein sequence ID" value="AAI17541.1"/>
    <property type="molecule type" value="mRNA"/>
</dbReference>
<dbReference type="EMBL" id="AY029599">
    <property type="protein sequence ID" value="AAK38347.1"/>
    <property type="molecule type" value="mRNA"/>
</dbReference>
<dbReference type="CCDS" id="CCDS18535.1">
    <molecule id="Q8C460-1"/>
</dbReference>
<dbReference type="RefSeq" id="NP_001272828.1">
    <molecule id="Q8C460-2"/>
    <property type="nucleotide sequence ID" value="NM_001285899.2"/>
</dbReference>
<dbReference type="RefSeq" id="NP_001272830.1">
    <property type="nucleotide sequence ID" value="NM_001285901.1"/>
</dbReference>
<dbReference type="RefSeq" id="NP_001272831.1">
    <property type="nucleotide sequence ID" value="NM_001285902.1"/>
</dbReference>
<dbReference type="RefSeq" id="NP_536717.2">
    <molecule id="Q8C460-1"/>
    <property type="nucleotide sequence ID" value="NM_080469.4"/>
</dbReference>
<dbReference type="SMR" id="Q8C460"/>
<dbReference type="BioGRID" id="228276">
    <property type="interactions" value="1"/>
</dbReference>
<dbReference type="FunCoup" id="Q8C460">
    <property type="interactions" value="1312"/>
</dbReference>
<dbReference type="STRING" id="10090.ENSMUSP00000042796"/>
<dbReference type="iPTMnet" id="Q8C460"/>
<dbReference type="PhosphoSitePlus" id="Q8C460"/>
<dbReference type="SwissPalm" id="Q8C460"/>
<dbReference type="jPOST" id="Q8C460"/>
<dbReference type="PaxDb" id="10090-ENSMUSP00000042796"/>
<dbReference type="PeptideAtlas" id="Q8C460"/>
<dbReference type="ProteomicsDB" id="275535">
    <molecule id="Q8C460-1"/>
</dbReference>
<dbReference type="ProteomicsDB" id="275536">
    <molecule id="Q8C460-2"/>
</dbReference>
<dbReference type="ProteomicsDB" id="275537">
    <molecule id="Q8C460-3"/>
</dbReference>
<dbReference type="Pumba" id="Q8C460"/>
<dbReference type="Antibodypedia" id="18452">
    <property type="antibodies" value="75 antibodies from 17 providers"/>
</dbReference>
<dbReference type="DNASU" id="140546"/>
<dbReference type="Ensembl" id="ENSMUST00000037127.15">
    <molecule id="Q8C460-1"/>
    <property type="protein sequence ID" value="ENSMUSP00000042796.9"/>
    <property type="gene ID" value="ENSMUSG00000033423.17"/>
</dbReference>
<dbReference type="GeneID" id="140546"/>
<dbReference type="KEGG" id="mmu:140546"/>
<dbReference type="UCSC" id="uc008uis.2">
    <molecule id="Q8C460-1"/>
    <property type="organism name" value="mouse"/>
</dbReference>
<dbReference type="UCSC" id="uc008uit.2">
    <molecule id="Q8C460-2"/>
    <property type="organism name" value="mouse"/>
</dbReference>
<dbReference type="AGR" id="MGI:2153887"/>
<dbReference type="CTD" id="79033"/>
<dbReference type="MGI" id="MGI:2153887">
    <property type="gene designation" value="Eri3"/>
</dbReference>
<dbReference type="VEuPathDB" id="HostDB:ENSMUSG00000033423"/>
<dbReference type="eggNOG" id="KOG0542">
    <property type="taxonomic scope" value="Eukaryota"/>
</dbReference>
<dbReference type="GeneTree" id="ENSGT00530000063205"/>
<dbReference type="HOGENOM" id="CLU_037266_0_0_1"/>
<dbReference type="InParanoid" id="Q8C460"/>
<dbReference type="OMA" id="XDCKNIA"/>
<dbReference type="OrthoDB" id="448399at2759"/>
<dbReference type="PhylomeDB" id="Q8C460"/>
<dbReference type="TreeFam" id="TF313449"/>
<dbReference type="BioGRID-ORCS" id="140546">
    <property type="hits" value="6 hits in 77 CRISPR screens"/>
</dbReference>
<dbReference type="ChiTaRS" id="Eri3">
    <property type="organism name" value="mouse"/>
</dbReference>
<dbReference type="PRO" id="PR:Q8C460"/>
<dbReference type="Proteomes" id="UP000000589">
    <property type="component" value="Chromosome 4"/>
</dbReference>
<dbReference type="RNAct" id="Q8C460">
    <property type="molecule type" value="protein"/>
</dbReference>
<dbReference type="Bgee" id="ENSMUSG00000033423">
    <property type="expression patterns" value="Expressed in humerus cartilage element and 250 other cell types or tissues"/>
</dbReference>
<dbReference type="ExpressionAtlas" id="Q8C460">
    <property type="expression patterns" value="baseline and differential"/>
</dbReference>
<dbReference type="GO" id="GO:0005886">
    <property type="term" value="C:plasma membrane"/>
    <property type="evidence" value="ECO:0000304"/>
    <property type="project" value="MGI"/>
</dbReference>
<dbReference type="GO" id="GO:0000175">
    <property type="term" value="F:3'-5'-RNA exonuclease activity"/>
    <property type="evidence" value="ECO:0007669"/>
    <property type="project" value="InterPro"/>
</dbReference>
<dbReference type="GO" id="GO:0046872">
    <property type="term" value="F:metal ion binding"/>
    <property type="evidence" value="ECO:0007669"/>
    <property type="project" value="UniProtKB-KW"/>
</dbReference>
<dbReference type="GO" id="GO:0003676">
    <property type="term" value="F:nucleic acid binding"/>
    <property type="evidence" value="ECO:0007669"/>
    <property type="project" value="InterPro"/>
</dbReference>
<dbReference type="CDD" id="cd06133">
    <property type="entry name" value="ERI-1_3'hExo_like"/>
    <property type="match status" value="1"/>
</dbReference>
<dbReference type="FunFam" id="3.30.420.10:FF:000029">
    <property type="entry name" value="ERI1 exoribonuclease 3 isoform X1"/>
    <property type="match status" value="1"/>
</dbReference>
<dbReference type="Gene3D" id="3.30.420.10">
    <property type="entry name" value="Ribonuclease H-like superfamily/Ribonuclease H"/>
    <property type="match status" value="1"/>
</dbReference>
<dbReference type="InterPro" id="IPR051274">
    <property type="entry name" value="3-5_Exoribonuclease"/>
</dbReference>
<dbReference type="InterPro" id="IPR047201">
    <property type="entry name" value="ERI-1_3'hExo-like"/>
</dbReference>
<dbReference type="InterPro" id="IPR013520">
    <property type="entry name" value="Exonuclease_RNaseT/DNA_pol3"/>
</dbReference>
<dbReference type="InterPro" id="IPR012337">
    <property type="entry name" value="RNaseH-like_sf"/>
</dbReference>
<dbReference type="InterPro" id="IPR036397">
    <property type="entry name" value="RNaseH_sf"/>
</dbReference>
<dbReference type="PANTHER" id="PTHR23044">
    <property type="entry name" value="3'-5' EXONUCLEASE ERI1-RELATED"/>
    <property type="match status" value="1"/>
</dbReference>
<dbReference type="PANTHER" id="PTHR23044:SF61">
    <property type="entry name" value="3'-5' EXORIBONUCLEASE 1-RELATED"/>
    <property type="match status" value="1"/>
</dbReference>
<dbReference type="Pfam" id="PF00929">
    <property type="entry name" value="RNase_T"/>
    <property type="match status" value="1"/>
</dbReference>
<dbReference type="SMART" id="SM00479">
    <property type="entry name" value="EXOIII"/>
    <property type="match status" value="1"/>
</dbReference>
<dbReference type="SUPFAM" id="SSF53098">
    <property type="entry name" value="Ribonuclease H-like"/>
    <property type="match status" value="1"/>
</dbReference>
<evidence type="ECO:0000250" key="1"/>
<evidence type="ECO:0000255" key="2"/>
<evidence type="ECO:0000269" key="3">
    <source>
    </source>
</evidence>
<evidence type="ECO:0000303" key="4">
    <source>
    </source>
</evidence>
<evidence type="ECO:0000303" key="5">
    <source>
    </source>
</evidence>
<accession>Q8C460</accession>
<accession>A2ADW0</accession>
<accession>A2ADW2</accession>
<accession>Q149R0</accession>
<accession>Q68FL7</accession>
<accession>Q923K5</accession>
<name>ERI3_MOUSE</name>
<protein>
    <recommendedName>
        <fullName>ERI1 exoribonuclease 3</fullName>
        <ecNumber>3.1.-.-</ecNumber>
    </recommendedName>
    <alternativeName>
        <fullName>Prion interactor 1</fullName>
    </alternativeName>
    <alternativeName>
        <fullName>Prion protein-interacting protein</fullName>
    </alternativeName>
</protein>
<proteinExistence type="evidence at protein level"/>
<reference key="1">
    <citation type="journal article" date="2005" name="Science">
        <title>The transcriptional landscape of the mammalian genome.</title>
        <authorList>
            <person name="Carninci P."/>
            <person name="Kasukawa T."/>
            <person name="Katayama S."/>
            <person name="Gough J."/>
            <person name="Frith M.C."/>
            <person name="Maeda N."/>
            <person name="Oyama R."/>
            <person name="Ravasi T."/>
            <person name="Lenhard B."/>
            <person name="Wells C."/>
            <person name="Kodzius R."/>
            <person name="Shimokawa K."/>
            <person name="Bajic V.B."/>
            <person name="Brenner S.E."/>
            <person name="Batalov S."/>
            <person name="Forrest A.R."/>
            <person name="Zavolan M."/>
            <person name="Davis M.J."/>
            <person name="Wilming L.G."/>
            <person name="Aidinis V."/>
            <person name="Allen J.E."/>
            <person name="Ambesi-Impiombato A."/>
            <person name="Apweiler R."/>
            <person name="Aturaliya R.N."/>
            <person name="Bailey T.L."/>
            <person name="Bansal M."/>
            <person name="Baxter L."/>
            <person name="Beisel K.W."/>
            <person name="Bersano T."/>
            <person name="Bono H."/>
            <person name="Chalk A.M."/>
            <person name="Chiu K.P."/>
            <person name="Choudhary V."/>
            <person name="Christoffels A."/>
            <person name="Clutterbuck D.R."/>
            <person name="Crowe M.L."/>
            <person name="Dalla E."/>
            <person name="Dalrymple B.P."/>
            <person name="de Bono B."/>
            <person name="Della Gatta G."/>
            <person name="di Bernardo D."/>
            <person name="Down T."/>
            <person name="Engstrom P."/>
            <person name="Fagiolini M."/>
            <person name="Faulkner G."/>
            <person name="Fletcher C.F."/>
            <person name="Fukushima T."/>
            <person name="Furuno M."/>
            <person name="Futaki S."/>
            <person name="Gariboldi M."/>
            <person name="Georgii-Hemming P."/>
            <person name="Gingeras T.R."/>
            <person name="Gojobori T."/>
            <person name="Green R.E."/>
            <person name="Gustincich S."/>
            <person name="Harbers M."/>
            <person name="Hayashi Y."/>
            <person name="Hensch T.K."/>
            <person name="Hirokawa N."/>
            <person name="Hill D."/>
            <person name="Huminiecki L."/>
            <person name="Iacono M."/>
            <person name="Ikeo K."/>
            <person name="Iwama A."/>
            <person name="Ishikawa T."/>
            <person name="Jakt M."/>
            <person name="Kanapin A."/>
            <person name="Katoh M."/>
            <person name="Kawasawa Y."/>
            <person name="Kelso J."/>
            <person name="Kitamura H."/>
            <person name="Kitano H."/>
            <person name="Kollias G."/>
            <person name="Krishnan S.P."/>
            <person name="Kruger A."/>
            <person name="Kummerfeld S.K."/>
            <person name="Kurochkin I.V."/>
            <person name="Lareau L.F."/>
            <person name="Lazarevic D."/>
            <person name="Lipovich L."/>
            <person name="Liu J."/>
            <person name="Liuni S."/>
            <person name="McWilliam S."/>
            <person name="Madan Babu M."/>
            <person name="Madera M."/>
            <person name="Marchionni L."/>
            <person name="Matsuda H."/>
            <person name="Matsuzawa S."/>
            <person name="Miki H."/>
            <person name="Mignone F."/>
            <person name="Miyake S."/>
            <person name="Morris K."/>
            <person name="Mottagui-Tabar S."/>
            <person name="Mulder N."/>
            <person name="Nakano N."/>
            <person name="Nakauchi H."/>
            <person name="Ng P."/>
            <person name="Nilsson R."/>
            <person name="Nishiguchi S."/>
            <person name="Nishikawa S."/>
            <person name="Nori F."/>
            <person name="Ohara O."/>
            <person name="Okazaki Y."/>
            <person name="Orlando V."/>
            <person name="Pang K.C."/>
            <person name="Pavan W.J."/>
            <person name="Pavesi G."/>
            <person name="Pesole G."/>
            <person name="Petrovsky N."/>
            <person name="Piazza S."/>
            <person name="Reed J."/>
            <person name="Reid J.F."/>
            <person name="Ring B.Z."/>
            <person name="Ringwald M."/>
            <person name="Rost B."/>
            <person name="Ruan Y."/>
            <person name="Salzberg S.L."/>
            <person name="Sandelin A."/>
            <person name="Schneider C."/>
            <person name="Schoenbach C."/>
            <person name="Sekiguchi K."/>
            <person name="Semple C.A."/>
            <person name="Seno S."/>
            <person name="Sessa L."/>
            <person name="Sheng Y."/>
            <person name="Shibata Y."/>
            <person name="Shimada H."/>
            <person name="Shimada K."/>
            <person name="Silva D."/>
            <person name="Sinclair B."/>
            <person name="Sperling S."/>
            <person name="Stupka E."/>
            <person name="Sugiura K."/>
            <person name="Sultana R."/>
            <person name="Takenaka Y."/>
            <person name="Taki K."/>
            <person name="Tammoja K."/>
            <person name="Tan S.L."/>
            <person name="Tang S."/>
            <person name="Taylor M.S."/>
            <person name="Tegner J."/>
            <person name="Teichmann S.A."/>
            <person name="Ueda H.R."/>
            <person name="van Nimwegen E."/>
            <person name="Verardo R."/>
            <person name="Wei C.L."/>
            <person name="Yagi K."/>
            <person name="Yamanishi H."/>
            <person name="Zabarovsky E."/>
            <person name="Zhu S."/>
            <person name="Zimmer A."/>
            <person name="Hide W."/>
            <person name="Bult C."/>
            <person name="Grimmond S.M."/>
            <person name="Teasdale R.D."/>
            <person name="Liu E.T."/>
            <person name="Brusic V."/>
            <person name="Quackenbush J."/>
            <person name="Wahlestedt C."/>
            <person name="Mattick J.S."/>
            <person name="Hume D.A."/>
            <person name="Kai C."/>
            <person name="Sasaki D."/>
            <person name="Tomaru Y."/>
            <person name="Fukuda S."/>
            <person name="Kanamori-Katayama M."/>
            <person name="Suzuki M."/>
            <person name="Aoki J."/>
            <person name="Arakawa T."/>
            <person name="Iida J."/>
            <person name="Imamura K."/>
            <person name="Itoh M."/>
            <person name="Kato T."/>
            <person name="Kawaji H."/>
            <person name="Kawagashira N."/>
            <person name="Kawashima T."/>
            <person name="Kojima M."/>
            <person name="Kondo S."/>
            <person name="Konno H."/>
            <person name="Nakano K."/>
            <person name="Ninomiya N."/>
            <person name="Nishio T."/>
            <person name="Okada M."/>
            <person name="Plessy C."/>
            <person name="Shibata K."/>
            <person name="Shiraki T."/>
            <person name="Suzuki S."/>
            <person name="Tagami M."/>
            <person name="Waki K."/>
            <person name="Watahiki A."/>
            <person name="Okamura-Oho Y."/>
            <person name="Suzuki H."/>
            <person name="Kawai J."/>
            <person name="Hayashizaki Y."/>
        </authorList>
    </citation>
    <scope>NUCLEOTIDE SEQUENCE [LARGE SCALE MRNA] (ISOFORM 1)</scope>
    <source>
        <strain>C57BL/6J</strain>
        <tissue>Spinal cord</tissue>
    </source>
</reference>
<reference key="2">
    <citation type="journal article" date="2009" name="PLoS Biol.">
        <title>Lineage-specific biology revealed by a finished genome assembly of the mouse.</title>
        <authorList>
            <person name="Church D.M."/>
            <person name="Goodstadt L."/>
            <person name="Hillier L.W."/>
            <person name="Zody M.C."/>
            <person name="Goldstein S."/>
            <person name="She X."/>
            <person name="Bult C.J."/>
            <person name="Agarwala R."/>
            <person name="Cherry J.L."/>
            <person name="DiCuccio M."/>
            <person name="Hlavina W."/>
            <person name="Kapustin Y."/>
            <person name="Meric P."/>
            <person name="Maglott D."/>
            <person name="Birtle Z."/>
            <person name="Marques A.C."/>
            <person name="Graves T."/>
            <person name="Zhou S."/>
            <person name="Teague B."/>
            <person name="Potamousis K."/>
            <person name="Churas C."/>
            <person name="Place M."/>
            <person name="Herschleb J."/>
            <person name="Runnheim R."/>
            <person name="Forrest D."/>
            <person name="Amos-Landgraf J."/>
            <person name="Schwartz D.C."/>
            <person name="Cheng Z."/>
            <person name="Lindblad-Toh K."/>
            <person name="Eichler E.E."/>
            <person name="Ponting C.P."/>
        </authorList>
    </citation>
    <scope>NUCLEOTIDE SEQUENCE [LARGE SCALE GENOMIC DNA]</scope>
    <scope>ALTERNATIVE SPLICING (ISOFORMS 2 AND 3)</scope>
    <source>
        <strain>C57BL/6J</strain>
    </source>
</reference>
<reference key="3">
    <citation type="journal article" date="2004" name="Genome Res.">
        <title>The status, quality, and expansion of the NIH full-length cDNA project: the Mammalian Gene Collection (MGC).</title>
        <authorList>
            <consortium name="The MGC Project Team"/>
        </authorList>
    </citation>
    <scope>NUCLEOTIDE SEQUENCE [LARGE SCALE MRNA] (ISOFORMS 1 AND 2)</scope>
    <source>
        <strain>C57BL/6J</strain>
        <tissue>Brain</tissue>
    </source>
</reference>
<reference key="4">
    <citation type="journal article" date="2001" name="J. Biol. Chem.">
        <title>PrPC directly interacts with proteins involved in signaling pathways.</title>
        <authorList>
            <person name="Spielhaupter C."/>
            <person name="Schaetzl H.M."/>
        </authorList>
    </citation>
    <scope>NUCLEOTIDE SEQUENCE [LARGE SCALE MRNA] OF 193-337 (ISOFORM 3)</scope>
    <scope>TISSUE SPECIFICITY</scope>
    <scope>INTERACTION WITH PRNP</scope>
    <source>
        <strain>BALB/cJ</strain>
    </source>
</reference>
<reference key="5">
    <citation type="journal article" date="2010" name="Cell">
        <title>A tissue-specific atlas of mouse protein phosphorylation and expression.</title>
        <authorList>
            <person name="Huttlin E.L."/>
            <person name="Jedrychowski M.P."/>
            <person name="Elias J.E."/>
            <person name="Goswami T."/>
            <person name="Rad R."/>
            <person name="Beausoleil S.A."/>
            <person name="Villen J."/>
            <person name="Haas W."/>
            <person name="Sowa M.E."/>
            <person name="Gygi S.P."/>
        </authorList>
    </citation>
    <scope>IDENTIFICATION BY MASS SPECTROMETRY [LARGE SCALE ANALYSIS]</scope>
    <source>
        <tissue>Brain</tissue>
        <tissue>Lung</tissue>
        <tissue>Pancreas</tissue>
        <tissue>Spleen</tissue>
        <tissue>Testis</tissue>
    </source>
</reference>
<reference key="6">
    <citation type="journal article" date="2014" name="Mol. Cell. Proteomics">
        <title>Immunoaffinity enrichment and mass spectrometry analysis of protein methylation.</title>
        <authorList>
            <person name="Guo A."/>
            <person name="Gu H."/>
            <person name="Zhou J."/>
            <person name="Mulhern D."/>
            <person name="Wang Y."/>
            <person name="Lee K.A."/>
            <person name="Yang V."/>
            <person name="Aguiar M."/>
            <person name="Kornhauser J."/>
            <person name="Jia X."/>
            <person name="Ren J."/>
            <person name="Beausoleil S.A."/>
            <person name="Silva J.C."/>
            <person name="Vemulapalli V."/>
            <person name="Bedford M.T."/>
            <person name="Comb M.J."/>
        </authorList>
    </citation>
    <scope>IDENTIFICATION BY MASS SPECTROMETRY [LARGE SCALE ANALYSIS]</scope>
    <source>
        <tissue>Embryo</tissue>
    </source>
</reference>
<feature type="chain" id="PRO_0000317627" description="ERI1 exoribonuclease 3">
    <location>
        <begin position="1"/>
        <end position="337"/>
    </location>
</feature>
<feature type="domain" description="Exonuclease">
    <location>
        <begin position="146"/>
        <end position="320"/>
    </location>
</feature>
<feature type="active site" description="Proton acceptor" evidence="2">
    <location>
        <position position="152"/>
    </location>
</feature>
<feature type="active site" description="Proton acceptor" evidence="2">
    <location>
        <position position="307"/>
    </location>
</feature>
<feature type="binding site" evidence="1">
    <location>
        <position position="150"/>
    </location>
    <ligand>
        <name>Mg(2+)</name>
        <dbReference type="ChEBI" id="CHEBI:18420"/>
        <label>1</label>
    </ligand>
</feature>
<feature type="binding site" evidence="1">
    <location>
        <position position="150"/>
    </location>
    <ligand>
        <name>Mg(2+)</name>
        <dbReference type="ChEBI" id="CHEBI:18420"/>
        <label>2</label>
    </ligand>
</feature>
<feature type="binding site" evidence="1">
    <location>
        <position position="152"/>
    </location>
    <ligand>
        <name>AMP</name>
        <dbReference type="ChEBI" id="CHEBI:456215"/>
    </ligand>
</feature>
<feature type="binding site" evidence="1">
    <location>
        <position position="152"/>
    </location>
    <ligand>
        <name>Mg(2+)</name>
        <dbReference type="ChEBI" id="CHEBI:18420"/>
        <label>1</label>
    </ligand>
</feature>
<feature type="binding site" evidence="1">
    <location>
        <position position="249"/>
    </location>
    <ligand>
        <name>Mg(2+)</name>
        <dbReference type="ChEBI" id="CHEBI:18420"/>
        <label>2</label>
    </ligand>
</feature>
<feature type="binding site" evidence="1">
    <location>
        <position position="307"/>
    </location>
    <ligand>
        <name>AMP</name>
        <dbReference type="ChEBI" id="CHEBI:456215"/>
    </ligand>
</feature>
<feature type="binding site" evidence="1">
    <location>
        <position position="312"/>
    </location>
    <ligand>
        <name>Mg(2+)</name>
        <dbReference type="ChEBI" id="CHEBI:18420"/>
        <label>1</label>
    </ligand>
</feature>
<feature type="splice variant" id="VSP_031105" description="In isoform 2." evidence="5">
    <original>MATASPAADGGRGRPWEGGLVSWPPAPPLTLPWTWMGPSWGQHPG</original>
    <variation>MCVCPQ</variation>
    <location>
        <begin position="1"/>
        <end position="45"/>
    </location>
</feature>
<feature type="splice variant" id="VSP_031106" description="In isoform 2." evidence="5">
    <location>
        <begin position="71"/>
        <end position="72"/>
    </location>
</feature>
<feature type="splice variant" id="VSP_031107" description="In isoform 3." evidence="4">
    <original>AYSFAMGCWPKNGLLDMNKGLSLQHIGRPHSGIDDCKNIANIMKTLAYRGFIFKQTSKPF</original>
    <variation>VPLSSSQGLWFSCPSPPPPTLVSFCFFSQYSPFSSLGNLY</variation>
    <location>
        <begin position="278"/>
        <end position="337"/>
    </location>
</feature>
<sequence>MATASPAADGGRGRPWEGGLVSWPPAPPLTLPWTWMGPSWGQHPGHWGFPALTDPSASPAASLGIFEVRRVLDASGCSMLAPLQTGAARFSSYLLSRARKVLGSHLLSPCGVPELCSISTRKLAAHGFGAAMAAMVPFPPQRYHYFLVLDFEATCDKPQIHPQEIIEFPILKLNGRTMEIESTFHMYVQPVVHPQLTPFCTELTGIIQAMVDGQPSLQQVLERVDEWMAKEGLLDPNVKSIFVTCGDWDLKVMLPGQCHYLGLPVADYFKQWINLKKAYSFAMGCWPKNGLLDMNKGLSLQHIGRPHSGIDDCKNIANIMKTLAYRGFIFKQTSKPF</sequence>
<organism>
    <name type="scientific">Mus musculus</name>
    <name type="common">Mouse</name>
    <dbReference type="NCBI Taxonomy" id="10090"/>
    <lineage>
        <taxon>Eukaryota</taxon>
        <taxon>Metazoa</taxon>
        <taxon>Chordata</taxon>
        <taxon>Craniata</taxon>
        <taxon>Vertebrata</taxon>
        <taxon>Euteleostomi</taxon>
        <taxon>Mammalia</taxon>
        <taxon>Eutheria</taxon>
        <taxon>Euarchontoglires</taxon>
        <taxon>Glires</taxon>
        <taxon>Rodentia</taxon>
        <taxon>Myomorpha</taxon>
        <taxon>Muroidea</taxon>
        <taxon>Muridae</taxon>
        <taxon>Murinae</taxon>
        <taxon>Mus</taxon>
        <taxon>Mus</taxon>
    </lineage>
</organism>
<comment type="cofactor">
    <cofactor evidence="1">
        <name>Mg(2+)</name>
        <dbReference type="ChEBI" id="CHEBI:18420"/>
    </cofactor>
    <text evidence="1">Binds 2 magnesium ions per subunit.</text>
</comment>
<comment type="subunit">
    <text evidence="3">Interacts with PRNP.</text>
</comment>
<comment type="alternative products">
    <event type="alternative splicing"/>
    <isoform>
        <id>Q8C460-1</id>
        <name>1</name>
        <sequence type="displayed"/>
    </isoform>
    <isoform>
        <id>Q8C460-2</id>
        <name>2</name>
        <sequence type="described" ref="VSP_031105 VSP_031106"/>
    </isoform>
    <isoform>
        <id>Q8C460-3</id>
        <name>3</name>
        <sequence type="described" ref="VSP_031107"/>
    </isoform>
</comment>
<comment type="tissue specificity">
    <text evidence="3">Highly expressed in the brain, heart, thyroid and testis. Expressed at low levels in the muscle cells, liver, pancreas and kidney.</text>
</comment>
<gene>
    <name type="primary">Eri3</name>
    <name type="synonym">Pint1</name>
    <name type="synonym">Prnpip</name>
    <name type="synonym">Prnpip1</name>
</gene>
<keyword id="KW-0025">Alternative splicing</keyword>
<keyword id="KW-0269">Exonuclease</keyword>
<keyword id="KW-0378">Hydrolase</keyword>
<keyword id="KW-0460">Magnesium</keyword>
<keyword id="KW-0479">Metal-binding</keyword>
<keyword id="KW-0540">Nuclease</keyword>
<keyword id="KW-1185">Reference proteome</keyword>